<protein>
    <recommendedName>
        <fullName evidence="1">tRNA (guanine-N(1)-)-methyltransferase</fullName>
        <ecNumber evidence="1">2.1.1.228</ecNumber>
    </recommendedName>
    <alternativeName>
        <fullName evidence="1">M1G-methyltransferase</fullName>
    </alternativeName>
    <alternativeName>
        <fullName evidence="1">tRNA [GM37] methyltransferase</fullName>
    </alternativeName>
</protein>
<dbReference type="EC" id="2.1.1.228" evidence="1"/>
<dbReference type="EMBL" id="CP000750">
    <property type="protein sequence ID" value="ABS02889.1"/>
    <property type="molecule type" value="Genomic_DNA"/>
</dbReference>
<dbReference type="RefSeq" id="WP_011981972.1">
    <property type="nucleotide sequence ID" value="NC_009664.2"/>
</dbReference>
<dbReference type="SMR" id="A6W7V0"/>
<dbReference type="STRING" id="266940.Krad_1401"/>
<dbReference type="KEGG" id="kra:Krad_1401"/>
<dbReference type="eggNOG" id="COG0336">
    <property type="taxonomic scope" value="Bacteria"/>
</dbReference>
<dbReference type="HOGENOM" id="CLU_047363_0_0_11"/>
<dbReference type="OrthoDB" id="9807416at2"/>
<dbReference type="Proteomes" id="UP000001116">
    <property type="component" value="Chromosome"/>
</dbReference>
<dbReference type="GO" id="GO:0005829">
    <property type="term" value="C:cytosol"/>
    <property type="evidence" value="ECO:0007669"/>
    <property type="project" value="TreeGrafter"/>
</dbReference>
<dbReference type="GO" id="GO:0052906">
    <property type="term" value="F:tRNA (guanine(37)-N1)-methyltransferase activity"/>
    <property type="evidence" value="ECO:0007669"/>
    <property type="project" value="UniProtKB-UniRule"/>
</dbReference>
<dbReference type="GO" id="GO:0002939">
    <property type="term" value="P:tRNA N1-guanine methylation"/>
    <property type="evidence" value="ECO:0007669"/>
    <property type="project" value="TreeGrafter"/>
</dbReference>
<dbReference type="CDD" id="cd18080">
    <property type="entry name" value="TrmD-like"/>
    <property type="match status" value="1"/>
</dbReference>
<dbReference type="FunFam" id="1.10.1270.20:FF:000002">
    <property type="entry name" value="tRNA (guanine-N(1)-)-methyltransferase"/>
    <property type="match status" value="1"/>
</dbReference>
<dbReference type="FunFam" id="3.40.1280.10:FF:000001">
    <property type="entry name" value="tRNA (guanine-N(1)-)-methyltransferase"/>
    <property type="match status" value="1"/>
</dbReference>
<dbReference type="Gene3D" id="3.40.1280.10">
    <property type="match status" value="1"/>
</dbReference>
<dbReference type="Gene3D" id="1.10.1270.20">
    <property type="entry name" value="tRNA(m1g37)methyltransferase, domain 2"/>
    <property type="match status" value="1"/>
</dbReference>
<dbReference type="HAMAP" id="MF_00605">
    <property type="entry name" value="TrmD"/>
    <property type="match status" value="1"/>
</dbReference>
<dbReference type="InterPro" id="IPR029028">
    <property type="entry name" value="Alpha/beta_knot_MTases"/>
</dbReference>
<dbReference type="InterPro" id="IPR023148">
    <property type="entry name" value="tRNA_m1G_MeTrfase_C_sf"/>
</dbReference>
<dbReference type="InterPro" id="IPR002649">
    <property type="entry name" value="tRNA_m1G_MeTrfase_TrmD"/>
</dbReference>
<dbReference type="InterPro" id="IPR029026">
    <property type="entry name" value="tRNA_m1G_MTases_N"/>
</dbReference>
<dbReference type="InterPro" id="IPR016009">
    <property type="entry name" value="tRNA_MeTrfase_TRMD/TRM10"/>
</dbReference>
<dbReference type="NCBIfam" id="NF000648">
    <property type="entry name" value="PRK00026.1"/>
    <property type="match status" value="1"/>
</dbReference>
<dbReference type="NCBIfam" id="TIGR00088">
    <property type="entry name" value="trmD"/>
    <property type="match status" value="1"/>
</dbReference>
<dbReference type="PANTHER" id="PTHR46417">
    <property type="entry name" value="TRNA (GUANINE-N(1)-)-METHYLTRANSFERASE"/>
    <property type="match status" value="1"/>
</dbReference>
<dbReference type="PANTHER" id="PTHR46417:SF1">
    <property type="entry name" value="TRNA (GUANINE-N(1)-)-METHYLTRANSFERASE"/>
    <property type="match status" value="1"/>
</dbReference>
<dbReference type="Pfam" id="PF01746">
    <property type="entry name" value="tRNA_m1G_MT"/>
    <property type="match status" value="1"/>
</dbReference>
<dbReference type="PIRSF" id="PIRSF000386">
    <property type="entry name" value="tRNA_mtase"/>
    <property type="match status" value="1"/>
</dbReference>
<dbReference type="SUPFAM" id="SSF75217">
    <property type="entry name" value="alpha/beta knot"/>
    <property type="match status" value="1"/>
</dbReference>
<comment type="function">
    <text evidence="1">Specifically methylates guanosine-37 in various tRNAs.</text>
</comment>
<comment type="catalytic activity">
    <reaction evidence="1">
        <text>guanosine(37) in tRNA + S-adenosyl-L-methionine = N(1)-methylguanosine(37) in tRNA + S-adenosyl-L-homocysteine + H(+)</text>
        <dbReference type="Rhea" id="RHEA:36899"/>
        <dbReference type="Rhea" id="RHEA-COMP:10145"/>
        <dbReference type="Rhea" id="RHEA-COMP:10147"/>
        <dbReference type="ChEBI" id="CHEBI:15378"/>
        <dbReference type="ChEBI" id="CHEBI:57856"/>
        <dbReference type="ChEBI" id="CHEBI:59789"/>
        <dbReference type="ChEBI" id="CHEBI:73542"/>
        <dbReference type="ChEBI" id="CHEBI:74269"/>
        <dbReference type="EC" id="2.1.1.228"/>
    </reaction>
</comment>
<comment type="subunit">
    <text evidence="1">Homodimer.</text>
</comment>
<comment type="subcellular location">
    <subcellularLocation>
        <location evidence="1">Cytoplasm</location>
    </subcellularLocation>
</comment>
<comment type="similarity">
    <text evidence="1">Belongs to the RNA methyltransferase TrmD family.</text>
</comment>
<accession>A6W7V0</accession>
<organism>
    <name type="scientific">Kineococcus radiotolerans (strain ATCC BAA-149 / DSM 14245 / SRS30216)</name>
    <dbReference type="NCBI Taxonomy" id="266940"/>
    <lineage>
        <taxon>Bacteria</taxon>
        <taxon>Bacillati</taxon>
        <taxon>Actinomycetota</taxon>
        <taxon>Actinomycetes</taxon>
        <taxon>Kineosporiales</taxon>
        <taxon>Kineosporiaceae</taxon>
        <taxon>Kineococcus</taxon>
    </lineage>
</organism>
<feature type="chain" id="PRO_1000082523" description="tRNA (guanine-N(1)-)-methyltransferase">
    <location>
        <begin position="1"/>
        <end position="279"/>
    </location>
</feature>
<feature type="region of interest" description="Disordered" evidence="2">
    <location>
        <begin position="256"/>
        <end position="279"/>
    </location>
</feature>
<feature type="binding site" evidence="1">
    <location>
        <position position="117"/>
    </location>
    <ligand>
        <name>S-adenosyl-L-methionine</name>
        <dbReference type="ChEBI" id="CHEBI:59789"/>
    </ligand>
</feature>
<feature type="binding site" evidence="1">
    <location>
        <begin position="141"/>
        <end position="146"/>
    </location>
    <ligand>
        <name>S-adenosyl-L-methionine</name>
        <dbReference type="ChEBI" id="CHEBI:59789"/>
    </ligand>
</feature>
<gene>
    <name evidence="1" type="primary">trmD</name>
    <name type="ordered locus">Krad_1401</name>
</gene>
<evidence type="ECO:0000255" key="1">
    <source>
        <dbReference type="HAMAP-Rule" id="MF_00605"/>
    </source>
</evidence>
<evidence type="ECO:0000256" key="2">
    <source>
        <dbReference type="SAM" id="MobiDB-lite"/>
    </source>
</evidence>
<sequence>MRLDVVTIFGEYLQPLQLSLIGKAQAQGLLDVRVRDLREHTHDRHRTVDDTPYGGGAGLLMKPEPWGEALDAVLADPPEDADPRGPVLVVPSPVGEVFTQRAAVELAAEPWLVFACGRYEGIDARVVEHYRTRVRVREVSLGDYVLNGGEVAVLAITEAVARLLPGVIGNAASLTEESHAPEHDGLLEHPAYTKPASWRGLDVPAVLAGGNHAAVERWRRDEALRRTATRRPDVLARLDPERCDARDLAVLAELGWTPDGSGFRAGGDPVADSSDTNEP</sequence>
<proteinExistence type="inferred from homology"/>
<name>TRMD_KINRD</name>
<reference key="1">
    <citation type="journal article" date="2008" name="PLoS ONE">
        <title>Survival in nuclear waste, extreme resistance, and potential applications gleaned from the genome sequence of Kineococcus radiotolerans SRS30216.</title>
        <authorList>
            <person name="Bagwell C.E."/>
            <person name="Bhat S."/>
            <person name="Hawkins G.M."/>
            <person name="Smith B.W."/>
            <person name="Biswas T."/>
            <person name="Hoover T.R."/>
            <person name="Saunders E."/>
            <person name="Han C.S."/>
            <person name="Tsodikov O.V."/>
            <person name="Shimkets L.J."/>
        </authorList>
    </citation>
    <scope>NUCLEOTIDE SEQUENCE [LARGE SCALE GENOMIC DNA]</scope>
    <source>
        <strain>ATCC BAA-149 / DSM 14245 / SRS30216</strain>
    </source>
</reference>
<keyword id="KW-0963">Cytoplasm</keyword>
<keyword id="KW-0489">Methyltransferase</keyword>
<keyword id="KW-1185">Reference proteome</keyword>
<keyword id="KW-0949">S-adenosyl-L-methionine</keyword>
<keyword id="KW-0808">Transferase</keyword>
<keyword id="KW-0819">tRNA processing</keyword>